<sequence length="185" mass="21201">MVKLPHIYEEIDIPENVTVEINGLKVKVNGPKGSIERDFSHVRNIILRKENSKIIVETFFADRRKKALVGTIASHIENMIKGVLKGYRYKLKIIYSHFPITVEVDDRNRIVRIKNFLGEKSDRIAKIIGEDVKVTVKGEDIIVEGIDIEHVGQTAANIELATKVKDKDRRVFADGIYIYDWGEEE</sequence>
<organism>
    <name type="scientific">Staphylothermus marinus (strain ATCC 43588 / DSM 3639 / JCM 9404 / F1)</name>
    <dbReference type="NCBI Taxonomy" id="399550"/>
    <lineage>
        <taxon>Archaea</taxon>
        <taxon>Thermoproteota</taxon>
        <taxon>Thermoprotei</taxon>
        <taxon>Desulfurococcales</taxon>
        <taxon>Desulfurococcaceae</taxon>
        <taxon>Staphylothermus</taxon>
    </lineage>
</organism>
<accession>A3DNC3</accession>
<proteinExistence type="inferred from homology"/>
<dbReference type="EMBL" id="CP000575">
    <property type="protein sequence ID" value="ABN70133.1"/>
    <property type="molecule type" value="Genomic_DNA"/>
</dbReference>
<dbReference type="RefSeq" id="WP_011839324.1">
    <property type="nucleotide sequence ID" value="NC_009033.1"/>
</dbReference>
<dbReference type="SMR" id="A3DNC3"/>
<dbReference type="STRING" id="399550.Smar_1035"/>
<dbReference type="GeneID" id="4907024"/>
<dbReference type="KEGG" id="smr:Smar_1035"/>
<dbReference type="eggNOG" id="arCOG04090">
    <property type="taxonomic scope" value="Archaea"/>
</dbReference>
<dbReference type="HOGENOM" id="CLU_065464_0_0_2"/>
<dbReference type="OrthoDB" id="7144at2157"/>
<dbReference type="Proteomes" id="UP000000254">
    <property type="component" value="Chromosome"/>
</dbReference>
<dbReference type="GO" id="GO:0022625">
    <property type="term" value="C:cytosolic large ribosomal subunit"/>
    <property type="evidence" value="ECO:0007669"/>
    <property type="project" value="TreeGrafter"/>
</dbReference>
<dbReference type="GO" id="GO:0019843">
    <property type="term" value="F:rRNA binding"/>
    <property type="evidence" value="ECO:0007669"/>
    <property type="project" value="UniProtKB-UniRule"/>
</dbReference>
<dbReference type="GO" id="GO:0003735">
    <property type="term" value="F:structural constituent of ribosome"/>
    <property type="evidence" value="ECO:0007669"/>
    <property type="project" value="InterPro"/>
</dbReference>
<dbReference type="GO" id="GO:0002181">
    <property type="term" value="P:cytoplasmic translation"/>
    <property type="evidence" value="ECO:0007669"/>
    <property type="project" value="TreeGrafter"/>
</dbReference>
<dbReference type="FunFam" id="3.90.930.12:FF:000008">
    <property type="entry name" value="50S ribosomal protein L6"/>
    <property type="match status" value="1"/>
</dbReference>
<dbReference type="FunFam" id="3.90.930.12:FF:000004">
    <property type="entry name" value="60S ribosomal protein L9"/>
    <property type="match status" value="1"/>
</dbReference>
<dbReference type="Gene3D" id="3.90.930.12">
    <property type="entry name" value="Ribosomal protein L6, alpha-beta domain"/>
    <property type="match status" value="2"/>
</dbReference>
<dbReference type="HAMAP" id="MF_01365_A">
    <property type="entry name" value="Ribosomal_uL6_A"/>
    <property type="match status" value="1"/>
</dbReference>
<dbReference type="InterPro" id="IPR000702">
    <property type="entry name" value="Ribosomal_uL6-like"/>
</dbReference>
<dbReference type="InterPro" id="IPR036789">
    <property type="entry name" value="Ribosomal_uL6-like_a/b-dom_sf"/>
</dbReference>
<dbReference type="InterPro" id="IPR020040">
    <property type="entry name" value="Ribosomal_uL6_a/b-dom"/>
</dbReference>
<dbReference type="InterPro" id="IPR019907">
    <property type="entry name" value="Ribosomal_uL6_arc"/>
</dbReference>
<dbReference type="NCBIfam" id="NF004037">
    <property type="entry name" value="PRK05518.1"/>
    <property type="match status" value="1"/>
</dbReference>
<dbReference type="NCBIfam" id="TIGR03653">
    <property type="entry name" value="uL6_arch"/>
    <property type="match status" value="1"/>
</dbReference>
<dbReference type="PANTHER" id="PTHR11655:SF16">
    <property type="entry name" value="60S RIBOSOMAL PROTEIN L9"/>
    <property type="match status" value="1"/>
</dbReference>
<dbReference type="PANTHER" id="PTHR11655">
    <property type="entry name" value="60S/50S RIBOSOMAL PROTEIN L6/L9"/>
    <property type="match status" value="1"/>
</dbReference>
<dbReference type="Pfam" id="PF00347">
    <property type="entry name" value="Ribosomal_L6"/>
    <property type="match status" value="2"/>
</dbReference>
<dbReference type="PIRSF" id="PIRSF002162">
    <property type="entry name" value="Ribosomal_L6"/>
    <property type="match status" value="1"/>
</dbReference>
<dbReference type="SUPFAM" id="SSF56053">
    <property type="entry name" value="Ribosomal protein L6"/>
    <property type="match status" value="2"/>
</dbReference>
<name>RL6_STAMF</name>
<keyword id="KW-1185">Reference proteome</keyword>
<keyword id="KW-0687">Ribonucleoprotein</keyword>
<keyword id="KW-0689">Ribosomal protein</keyword>
<keyword id="KW-0694">RNA-binding</keyword>
<keyword id="KW-0699">rRNA-binding</keyword>
<feature type="chain" id="PRO_1000055314" description="Large ribosomal subunit protein uL6">
    <location>
        <begin position="1"/>
        <end position="185"/>
    </location>
</feature>
<protein>
    <recommendedName>
        <fullName evidence="1">Large ribosomal subunit protein uL6</fullName>
    </recommendedName>
    <alternativeName>
        <fullName evidence="2">50S ribosomal protein L6</fullName>
    </alternativeName>
</protein>
<evidence type="ECO:0000255" key="1">
    <source>
        <dbReference type="HAMAP-Rule" id="MF_01365"/>
    </source>
</evidence>
<evidence type="ECO:0000305" key="2"/>
<reference key="1">
    <citation type="journal article" date="2009" name="BMC Genomics">
        <title>The complete genome sequence of Staphylothermus marinus reveals differences in sulfur metabolism among heterotrophic Crenarchaeota.</title>
        <authorList>
            <person name="Anderson I.J."/>
            <person name="Dharmarajan L."/>
            <person name="Rodriguez J."/>
            <person name="Hooper S."/>
            <person name="Porat I."/>
            <person name="Ulrich L.E."/>
            <person name="Elkins J.G."/>
            <person name="Mavromatis K."/>
            <person name="Sun H."/>
            <person name="Land M."/>
            <person name="Lapidus A."/>
            <person name="Lucas S."/>
            <person name="Barry K."/>
            <person name="Huber H."/>
            <person name="Zhulin I.B."/>
            <person name="Whitman W.B."/>
            <person name="Mukhopadhyay B."/>
            <person name="Woese C."/>
            <person name="Bristow J."/>
            <person name="Kyrpides N."/>
        </authorList>
    </citation>
    <scope>NUCLEOTIDE SEQUENCE [LARGE SCALE GENOMIC DNA]</scope>
    <source>
        <strain>ATCC 43588 / DSM 3639 / JCM 9404 / F1</strain>
    </source>
</reference>
<reference key="2">
    <citation type="journal article" date="2009" name="Stand. Genomic Sci.">
        <title>Complete genome sequence of Staphylothermus marinus Stetter and Fiala 1986 type strain F1.</title>
        <authorList>
            <person name="Anderson I.J."/>
            <person name="Sun H."/>
            <person name="Lapidus A."/>
            <person name="Copeland A."/>
            <person name="Glavina Del Rio T."/>
            <person name="Tice H."/>
            <person name="Dalin E."/>
            <person name="Lucas S."/>
            <person name="Barry K."/>
            <person name="Land M."/>
            <person name="Richardson P."/>
            <person name="Huber H."/>
            <person name="Kyrpides N.C."/>
        </authorList>
    </citation>
    <scope>NUCLEOTIDE SEQUENCE [LARGE SCALE GENOMIC DNA]</scope>
    <source>
        <strain>ATCC 43588 / DSM 3639 / JCM 9404 / F1</strain>
    </source>
</reference>
<comment type="function">
    <text evidence="1">This protein binds to the 23S rRNA, and is important in its secondary structure. It is located near the subunit interface in the base of the L7/L12 stalk, and near the tRNA binding site of the peptidyltransferase center.</text>
</comment>
<comment type="subunit">
    <text evidence="1">Part of the 50S ribosomal subunit.</text>
</comment>
<comment type="similarity">
    <text evidence="1">Belongs to the universal ribosomal protein uL6 family.</text>
</comment>
<gene>
    <name evidence="1" type="primary">rpl6</name>
    <name type="ordered locus">Smar_1035</name>
</gene>